<accession>Q7TYQ9</accession>
<accession>A0A1R3Y118</accession>
<accession>X2BKA8</accession>
<dbReference type="EC" id="1.14.13.59"/>
<dbReference type="EMBL" id="LT708304">
    <property type="protein sequence ID" value="SIU01011.1"/>
    <property type="molecule type" value="Genomic_DNA"/>
</dbReference>
<dbReference type="RefSeq" id="NP_856048.1">
    <property type="nucleotide sequence ID" value="NC_002945.3"/>
</dbReference>
<dbReference type="RefSeq" id="WP_003899296.1">
    <property type="nucleotide sequence ID" value="NC_002945.4"/>
</dbReference>
<dbReference type="SMR" id="Q7TYQ9"/>
<dbReference type="KEGG" id="mbo:BQ2027_MB2399C"/>
<dbReference type="PATRIC" id="fig|233413.5.peg.2636"/>
<dbReference type="UniPathway" id="UPA00011"/>
<dbReference type="Proteomes" id="UP000001419">
    <property type="component" value="Chromosome"/>
</dbReference>
<dbReference type="GO" id="GO:0047091">
    <property type="term" value="F:L-lysine 6-monooxygenase (NADPH) activity"/>
    <property type="evidence" value="ECO:0007669"/>
    <property type="project" value="UniProtKB-EC"/>
</dbReference>
<dbReference type="GO" id="GO:0009058">
    <property type="term" value="P:biosynthetic process"/>
    <property type="evidence" value="ECO:0007669"/>
    <property type="project" value="UniProtKB-ARBA"/>
</dbReference>
<dbReference type="Gene3D" id="3.50.50.60">
    <property type="entry name" value="FAD/NAD(P)-binding domain"/>
    <property type="match status" value="1"/>
</dbReference>
<dbReference type="InterPro" id="IPR036188">
    <property type="entry name" value="FAD/NAD-bd_sf"/>
</dbReference>
<dbReference type="InterPro" id="IPR025700">
    <property type="entry name" value="Lys/Orn_oxygenase"/>
</dbReference>
<dbReference type="Pfam" id="PF13434">
    <property type="entry name" value="Lys_Orn_oxgnase"/>
    <property type="match status" value="1"/>
</dbReference>
<dbReference type="SUPFAM" id="SSF51905">
    <property type="entry name" value="FAD/NAD(P)-binding domain"/>
    <property type="match status" value="1"/>
</dbReference>
<feature type="signal peptide" evidence="2">
    <location>
        <begin position="1"/>
        <end position="21"/>
    </location>
</feature>
<feature type="chain" id="PRO_0000261309" description="L-lysine N6-monooxygenase MbtG">
    <location>
        <begin position="22"/>
        <end position="431"/>
    </location>
</feature>
<gene>
    <name type="primary">mbtG</name>
    <name type="ordered locus">BQ2027_MB2399C</name>
</gene>
<keyword id="KW-0274">FAD</keyword>
<keyword id="KW-0285">Flavoprotein</keyword>
<keyword id="KW-0503">Monooxygenase</keyword>
<keyword id="KW-0521">NADP</keyword>
<keyword id="KW-0560">Oxidoreductase</keyword>
<keyword id="KW-1185">Reference proteome</keyword>
<keyword id="KW-0732">Signal</keyword>
<proteinExistence type="inferred from homology"/>
<reference key="1">
    <citation type="journal article" date="2003" name="Proc. Natl. Acad. Sci. U.S.A.">
        <title>The complete genome sequence of Mycobacterium bovis.</title>
        <authorList>
            <person name="Garnier T."/>
            <person name="Eiglmeier K."/>
            <person name="Camus J.-C."/>
            <person name="Medina N."/>
            <person name="Mansoor H."/>
            <person name="Pryor M."/>
            <person name="Duthoy S."/>
            <person name="Grondin S."/>
            <person name="Lacroix C."/>
            <person name="Monsempe C."/>
            <person name="Simon S."/>
            <person name="Harris B."/>
            <person name="Atkin R."/>
            <person name="Doggett J."/>
            <person name="Mayes R."/>
            <person name="Keating L."/>
            <person name="Wheeler P.R."/>
            <person name="Parkhill J."/>
            <person name="Barrell B.G."/>
            <person name="Cole S.T."/>
            <person name="Gordon S.V."/>
            <person name="Hewinson R.G."/>
        </authorList>
    </citation>
    <scope>NUCLEOTIDE SEQUENCE [LARGE SCALE GENOMIC DNA]</scope>
    <source>
        <strain>ATCC BAA-935 / AF2122/97</strain>
    </source>
</reference>
<reference key="2">
    <citation type="journal article" date="2017" name="Genome Announc.">
        <title>Updated reference genome sequence and annotation of Mycobacterium bovis AF2122/97.</title>
        <authorList>
            <person name="Malone K.M."/>
            <person name="Farrell D."/>
            <person name="Stuber T.P."/>
            <person name="Schubert O.T."/>
            <person name="Aebersold R."/>
            <person name="Robbe-Austerman S."/>
            <person name="Gordon S.V."/>
        </authorList>
    </citation>
    <scope>NUCLEOTIDE SEQUENCE [LARGE SCALE GENOMIC DNA]</scope>
    <scope>GENOME REANNOTATION</scope>
    <source>
        <strain>ATCC BAA-935 / AF2122/97</strain>
    </source>
</reference>
<organism>
    <name type="scientific">Mycobacterium bovis (strain ATCC BAA-935 / AF2122/97)</name>
    <dbReference type="NCBI Taxonomy" id="233413"/>
    <lineage>
        <taxon>Bacteria</taxon>
        <taxon>Bacillati</taxon>
        <taxon>Actinomycetota</taxon>
        <taxon>Actinomycetes</taxon>
        <taxon>Mycobacteriales</taxon>
        <taxon>Mycobacteriaceae</taxon>
        <taxon>Mycobacterium</taxon>
        <taxon>Mycobacterium tuberculosis complex</taxon>
    </lineage>
</organism>
<sequence length="431" mass="46944">MNPTLAVLGAGAKAVAVAAKASVLRDMGVDVPDVIAVERIGVGANWQASGGWTDGAHRLGTSPEKDVGFPYRSALVPRRNAELDERMTRYSWQSYLIATASFAEWIDRGRPAPTHRRWSQYLAWVADHIGLKVIHGEVERLAVTGDRWALCTHETTVQADALMITGPGQAEKSLLPGNPRVLSIAQFWDRAAGHDRINAERVAVIGGGETAASMLNELFRHRVSTITVISPQVTLFTRGEGFFENSLFSDPTDWAALTFDERRDALARTDRGVFSATVQEALLADDRIHHLRGRVAHAVGRQGQIRLTLSTNRGSENFETVHGFDLVIDGSGADPLWFTSLFSQHTLDLLELGLGGPLTADRLQEAIGYDLAVTDVTPKLFLPTLSGLTQGPGFPNLSCLGLLSDRVLGAGIFTPTKHNDTRRSGEHQSFR</sequence>
<protein>
    <recommendedName>
        <fullName>L-lysine N6-monooxygenase MbtG</fullName>
        <ecNumber>1.14.13.59</ecNumber>
    </recommendedName>
    <alternativeName>
        <fullName>Lysine 6-N-hydroxylase</fullName>
    </alternativeName>
    <alternativeName>
        <fullName>Lysine N6-hydroxylase</fullName>
    </alternativeName>
    <alternativeName>
        <fullName>Lysine-N-oxygenase</fullName>
    </alternativeName>
    <alternativeName>
        <fullName>Mycobactin synthase protein G</fullName>
    </alternativeName>
</protein>
<name>MBTG_MYCBO</name>
<comment type="function">
    <text evidence="1">Flavoprotein monooxygenase required for N-hydroxylation of the two acylated lysine residues during mycobactin assembly, thus producing the hydroxamate groups necessary for iron sequestration. Is also able, but less efficiently, to hydroxylate L-lysine (non acylated) in vitro (By similarity).</text>
</comment>
<comment type="catalytic activity">
    <reaction>
        <text>L-lysine + NADPH + O2 = N(6)-hydroxy-L-lysine + NADP(+) + H2O</text>
        <dbReference type="Rhea" id="RHEA:23228"/>
        <dbReference type="ChEBI" id="CHEBI:15377"/>
        <dbReference type="ChEBI" id="CHEBI:15379"/>
        <dbReference type="ChEBI" id="CHEBI:32551"/>
        <dbReference type="ChEBI" id="CHEBI:57783"/>
        <dbReference type="ChEBI" id="CHEBI:57820"/>
        <dbReference type="ChEBI" id="CHEBI:58349"/>
        <dbReference type="EC" id="1.14.13.59"/>
    </reaction>
</comment>
<comment type="cofactor">
    <cofactor evidence="1">
        <name>FAD</name>
        <dbReference type="ChEBI" id="CHEBI:57692"/>
    </cofactor>
</comment>
<comment type="pathway">
    <text>Siderophore biosynthesis; mycobactin biosynthesis.</text>
</comment>
<comment type="similarity">
    <text evidence="3">Belongs to the lysine N(6)-hydroxylase/L-ornithine N(5)-oxygenase family.</text>
</comment>
<evidence type="ECO:0000250" key="1"/>
<evidence type="ECO:0000255" key="2"/>
<evidence type="ECO:0000305" key="3"/>